<accession>A0A397HPF2</accession>
<evidence type="ECO:0000256" key="1">
    <source>
        <dbReference type="SAM" id="MobiDB-lite"/>
    </source>
</evidence>
<evidence type="ECO:0000269" key="2">
    <source>
    </source>
</evidence>
<evidence type="ECO:0000303" key="3">
    <source>
    </source>
</evidence>
<comment type="function">
    <text evidence="2">ATP-grasp enzyme; part of the ank cluster that mediates the biosynthesis of NK13650 C, a highly modified cyclo-arginine-tyrosine dipeptide (PubMed:36702957). AnkG catalyzes the last step of the pathway via amidation NK13650 D with L-Asp to produce NK13650 C (PubMed:36702957). AnkG also amidates NK13650 B into NK13650 A (PubMed:36702957). Within the pathway, the cyclodipeptide synthase ankA acts as the scaffold-generating enzyme and is responsible for formation of the cyclo-Arg-Tyr diketopiperazine (cRY) from L-Arg and L-Tyr. The ankA product cRY is desaturated by the cytochrome P450 monooxygenase ankB to yield a dehydro-cyclodipeptide intermediate. The FAD-dependent monooxygenase ankC then installs the m-OH, ankD catalyzes the attachment of L-homoserine, and ankE ligates citrate to the ankD product to yield NK13650 B. The O-methyltransferase ankF is responsible for methylation of the C-17 phenol group of NK13650 B to produce NK13650 D. Amidation of NK13650 D with L-Asp by ankG then leads to the production of NK13650 C, whereas amidation of NK13650 B produces NK13650 A (PubMed:36702957).</text>
</comment>
<comment type="catalytic activity">
    <reaction evidence="2">
        <text>NK13650 D + L-aspartate + ATP = NK13650 C + AMP + diphosphate + H(+)</text>
        <dbReference type="Rhea" id="RHEA:80263"/>
        <dbReference type="ChEBI" id="CHEBI:15378"/>
        <dbReference type="ChEBI" id="CHEBI:29991"/>
        <dbReference type="ChEBI" id="CHEBI:30616"/>
        <dbReference type="ChEBI" id="CHEBI:33019"/>
        <dbReference type="ChEBI" id="CHEBI:231318"/>
        <dbReference type="ChEBI" id="CHEBI:231319"/>
        <dbReference type="ChEBI" id="CHEBI:456215"/>
    </reaction>
    <physiologicalReaction direction="left-to-right" evidence="2">
        <dbReference type="Rhea" id="RHEA:80264"/>
    </physiologicalReaction>
</comment>
<comment type="catalytic activity">
    <reaction evidence="2">
        <text>NK13650 B + L-aspartate + ATP = NK13650 A + AMP + diphosphate + H(+)</text>
        <dbReference type="Rhea" id="RHEA:80267"/>
        <dbReference type="ChEBI" id="CHEBI:15378"/>
        <dbReference type="ChEBI" id="CHEBI:29991"/>
        <dbReference type="ChEBI" id="CHEBI:30616"/>
        <dbReference type="ChEBI" id="CHEBI:33019"/>
        <dbReference type="ChEBI" id="CHEBI:231317"/>
        <dbReference type="ChEBI" id="CHEBI:231320"/>
        <dbReference type="ChEBI" id="CHEBI:456215"/>
    </reaction>
    <physiologicalReaction direction="left-to-right" evidence="2">
        <dbReference type="Rhea" id="RHEA:80268"/>
    </physiologicalReaction>
</comment>
<comment type="pathway">
    <text evidence="2">Secondary metabolite biosynthesis.</text>
</comment>
<proteinExistence type="evidence at protein level"/>
<gene>
    <name evidence="3" type="primary">ankG</name>
    <name type="ORF">CDV56_109067</name>
</gene>
<protein>
    <recommendedName>
        <fullName evidence="3">ATP-grasp enzyme ankG</fullName>
    </recommendedName>
    <alternativeName>
        <fullName evidence="3">Ank biosynthesis cluster protein G</fullName>
    </alternativeName>
</protein>
<organism>
    <name type="scientific">Aspergillus thermomutatus</name>
    <name type="common">Neosartorya pseudofischeri</name>
    <dbReference type="NCBI Taxonomy" id="41047"/>
    <lineage>
        <taxon>Eukaryota</taxon>
        <taxon>Fungi</taxon>
        <taxon>Dikarya</taxon>
        <taxon>Ascomycota</taxon>
        <taxon>Pezizomycotina</taxon>
        <taxon>Eurotiomycetes</taxon>
        <taxon>Eurotiomycetidae</taxon>
        <taxon>Eurotiales</taxon>
        <taxon>Aspergillaceae</taxon>
        <taxon>Aspergillus</taxon>
        <taxon>Aspergillus subgen. Fumigati</taxon>
    </lineage>
</organism>
<name>ANKG_ASPTH</name>
<reference key="1">
    <citation type="journal article" date="2019" name="Microbiol. Resour. Announc.">
        <title>Draft Genome Sequence of Azole-Resistant Aspergillus thermomutatus (Neosartorya pseudofischeri) Strain HMR-AF-39, Isolated from a Human Nasal Septum Abscess Aspirate.</title>
        <authorList>
            <person name="Parent-Michaud M."/>
            <person name="Dufresne P.J."/>
            <person name="Fournier E."/>
            <person name="Martineau C."/>
            <person name="Moreira S."/>
            <person name="Perkins V."/>
            <person name="de Repentigny L."/>
            <person name="Dufresne S.F."/>
        </authorList>
    </citation>
    <scope>NUCLEOTIDE SEQUENCE [LARGE SCALE GENOMIC DNA]</scope>
    <source>
        <strain>HMR-AF-39/LSPQ-01276</strain>
    </source>
</reference>
<reference key="2">
    <citation type="journal article" date="2023" name="Nat. Chem. Biol.">
        <title>Genome mining for unknown-unknown natural products.</title>
        <authorList>
            <person name="Yee D.A."/>
            <person name="Niwa K."/>
            <person name="Perlatti B."/>
            <person name="Chen M."/>
            <person name="Li Y."/>
            <person name="Tang Y."/>
        </authorList>
    </citation>
    <scope>FUNCTION</scope>
    <scope>CATALYTIC ACTIVITY</scope>
    <scope>PATHWAY</scope>
</reference>
<dbReference type="EMBL" id="NKHU02000029">
    <property type="protein sequence ID" value="RHZ63466.1"/>
    <property type="molecule type" value="Genomic_DNA"/>
</dbReference>
<dbReference type="STRING" id="41047.A0A397HPF2"/>
<dbReference type="VEuPathDB" id="FungiDB:CDV56_109067"/>
<dbReference type="OrthoDB" id="2117718at2759"/>
<dbReference type="Proteomes" id="UP000215305">
    <property type="component" value="Unassembled WGS sequence"/>
</dbReference>
<dbReference type="GO" id="GO:0005524">
    <property type="term" value="F:ATP binding"/>
    <property type="evidence" value="ECO:0007669"/>
    <property type="project" value="UniProtKB-KW"/>
</dbReference>
<dbReference type="GO" id="GO:0016874">
    <property type="term" value="F:ligase activity"/>
    <property type="evidence" value="ECO:0007669"/>
    <property type="project" value="UniProtKB-KW"/>
</dbReference>
<dbReference type="SUPFAM" id="SSF56059">
    <property type="entry name" value="Glutathione synthetase ATP-binding domain-like"/>
    <property type="match status" value="1"/>
</dbReference>
<keyword id="KW-0067">ATP-binding</keyword>
<keyword id="KW-0436">Ligase</keyword>
<keyword id="KW-0547">Nucleotide-binding</keyword>
<keyword id="KW-1185">Reference proteome</keyword>
<sequence length="480" mass="53855">MYQISLKATKSAAEPTSSTDASHDDRQVERDSYDTAMLRFISDMELSSMYAEKTSPYPILMPRSFLEDLKNFQDLLFVAVSNILDRWWEDREADFPRRMPLEPHEESVLKHYNERPLHWRPDMLLPAAGDPNTNLPFKICEINARSPFNSMIKSICMFQAAAASKTALPDGLELASTADSLVDSLVSLFNPDLPLHVIWHEGITDPIDAFSSFYKKRTGKIPRVIRATDLRLAPDSSSPTGRILCCVASAASADHSNGQAIVSETGEPLERIYQVGLQMSHRDYSELSSEVLQQLAVDGICDLRNIFLVSDKRMLGVIWQELDSLVHKHHVLTAEQAEILRQGIVHTILPGSEDMERLLRQTREGSVSKDSYLLKPARGHRGMGILLGKDLGQEEFEGLLEELADPLLPADRRYVVQPFIEQALFGLRLYDDSEPQQCQMTGTYHAIGGCFAGLGVWRADSERICSRFHGAFSIPAIVPR</sequence>
<feature type="chain" id="PRO_0000460661" description="ATP-grasp enzyme ankG">
    <location>
        <begin position="1"/>
        <end position="480"/>
    </location>
</feature>
<feature type="region of interest" description="Disordered" evidence="1">
    <location>
        <begin position="1"/>
        <end position="30"/>
    </location>
</feature>
<feature type="compositionally biased region" description="Basic and acidic residues" evidence="1">
    <location>
        <begin position="21"/>
        <end position="30"/>
    </location>
</feature>